<proteinExistence type="inferred from homology"/>
<feature type="chain" id="PRO_0000170477" description="Alkaline shock protein 23">
    <location>
        <begin position="1"/>
        <end position="169"/>
    </location>
</feature>
<feature type="region of interest" description="Disordered" evidence="2">
    <location>
        <begin position="1"/>
        <end position="40"/>
    </location>
</feature>
<feature type="region of interest" description="Disordered" evidence="2">
    <location>
        <begin position="148"/>
        <end position="169"/>
    </location>
</feature>
<feature type="compositionally biased region" description="Basic and acidic residues" evidence="2">
    <location>
        <begin position="19"/>
        <end position="29"/>
    </location>
</feature>
<feature type="compositionally biased region" description="Basic and acidic residues" evidence="2">
    <location>
        <begin position="148"/>
        <end position="158"/>
    </location>
</feature>
<feature type="compositionally biased region" description="Low complexity" evidence="2">
    <location>
        <begin position="159"/>
        <end position="169"/>
    </location>
</feature>
<name>ASP23_STAAM</name>
<comment type="function">
    <text evidence="1">May play a key role in alkaline pH tolerance.</text>
</comment>
<comment type="similarity">
    <text evidence="3">Belongs to the asp23 family.</text>
</comment>
<evidence type="ECO:0000250" key="1"/>
<evidence type="ECO:0000256" key="2">
    <source>
        <dbReference type="SAM" id="MobiDB-lite"/>
    </source>
</evidence>
<evidence type="ECO:0000305" key="3"/>
<organism>
    <name type="scientific">Staphylococcus aureus (strain Mu50 / ATCC 700699)</name>
    <dbReference type="NCBI Taxonomy" id="158878"/>
    <lineage>
        <taxon>Bacteria</taxon>
        <taxon>Bacillati</taxon>
        <taxon>Bacillota</taxon>
        <taxon>Bacilli</taxon>
        <taxon>Bacillales</taxon>
        <taxon>Staphylococcaceae</taxon>
        <taxon>Staphylococcus</taxon>
    </lineage>
</organism>
<protein>
    <recommendedName>
        <fullName>Alkaline shock protein 23</fullName>
    </recommendedName>
</protein>
<sequence>MTVDNNKAKQAYDNQTGVNEKEREERQKQQEQNQEPQFKNKLTFSDEVVEKIAGIAAREVKGILDMKGGLTDTFTNAFSSGNNVTQGVSVEVGEKQAAVDLKVILEYGESAPKIFRKVTELVKEQVKYITGLDVVEVNMQVDDVMTQKEWKQKHEKNNENNNQERQGLQ</sequence>
<dbReference type="EMBL" id="BA000017">
    <property type="protein sequence ID" value="BAB58344.1"/>
    <property type="molecule type" value="Genomic_DNA"/>
</dbReference>
<dbReference type="RefSeq" id="WP_000215236.1">
    <property type="nucleotide sequence ID" value="NC_002758.2"/>
</dbReference>
<dbReference type="SMR" id="P0A0P6"/>
<dbReference type="KEGG" id="sav:SAV2182"/>
<dbReference type="HOGENOM" id="CLU_113198_1_1_9"/>
<dbReference type="PhylomeDB" id="P0A0P6"/>
<dbReference type="Proteomes" id="UP000002481">
    <property type="component" value="Chromosome"/>
</dbReference>
<dbReference type="InterPro" id="IPR005531">
    <property type="entry name" value="Asp23"/>
</dbReference>
<dbReference type="PANTHER" id="PTHR34297:SF3">
    <property type="entry name" value="ALKALINE SHOCK PROTEIN 23"/>
    <property type="match status" value="1"/>
</dbReference>
<dbReference type="PANTHER" id="PTHR34297">
    <property type="entry name" value="HYPOTHETICAL CYTOSOLIC PROTEIN-RELATED"/>
    <property type="match status" value="1"/>
</dbReference>
<dbReference type="Pfam" id="PF03780">
    <property type="entry name" value="Asp23"/>
    <property type="match status" value="1"/>
</dbReference>
<accession>P0A0P6</accession>
<accession>Q53485</accession>
<gene>
    <name type="primary">asp23</name>
    <name type="ordered locus">SAV2182</name>
</gene>
<reference key="1">
    <citation type="journal article" date="2001" name="Lancet">
        <title>Whole genome sequencing of meticillin-resistant Staphylococcus aureus.</title>
        <authorList>
            <person name="Kuroda M."/>
            <person name="Ohta T."/>
            <person name="Uchiyama I."/>
            <person name="Baba T."/>
            <person name="Yuzawa H."/>
            <person name="Kobayashi I."/>
            <person name="Cui L."/>
            <person name="Oguchi A."/>
            <person name="Aoki K."/>
            <person name="Nagai Y."/>
            <person name="Lian J.-Q."/>
            <person name="Ito T."/>
            <person name="Kanamori M."/>
            <person name="Matsumaru H."/>
            <person name="Maruyama A."/>
            <person name="Murakami H."/>
            <person name="Hosoyama A."/>
            <person name="Mizutani-Ui Y."/>
            <person name="Takahashi N.K."/>
            <person name="Sawano T."/>
            <person name="Inoue R."/>
            <person name="Kaito C."/>
            <person name="Sekimizu K."/>
            <person name="Hirakawa H."/>
            <person name="Kuhara S."/>
            <person name="Goto S."/>
            <person name="Yabuzaki J."/>
            <person name="Kanehisa M."/>
            <person name="Yamashita A."/>
            <person name="Oshima K."/>
            <person name="Furuya K."/>
            <person name="Yoshino C."/>
            <person name="Shiba T."/>
            <person name="Hattori M."/>
            <person name="Ogasawara N."/>
            <person name="Hayashi H."/>
            <person name="Hiramatsu K."/>
        </authorList>
    </citation>
    <scope>NUCLEOTIDE SEQUENCE [LARGE SCALE GENOMIC DNA]</scope>
    <source>
        <strain>Mu50 / ATCC 700699</strain>
    </source>
</reference>